<reference key="1">
    <citation type="submission" date="2008-01" db="EMBL/GenBank/DDBJ databases">
        <title>Complete sequence of Shewanella halifaxensis HAW-EB4.</title>
        <authorList>
            <consortium name="US DOE Joint Genome Institute"/>
            <person name="Copeland A."/>
            <person name="Lucas S."/>
            <person name="Lapidus A."/>
            <person name="Glavina del Rio T."/>
            <person name="Dalin E."/>
            <person name="Tice H."/>
            <person name="Bruce D."/>
            <person name="Goodwin L."/>
            <person name="Pitluck S."/>
            <person name="Sims D."/>
            <person name="Brettin T."/>
            <person name="Detter J.C."/>
            <person name="Han C."/>
            <person name="Kuske C.R."/>
            <person name="Schmutz J."/>
            <person name="Larimer F."/>
            <person name="Land M."/>
            <person name="Hauser L."/>
            <person name="Kyrpides N."/>
            <person name="Kim E."/>
            <person name="Zhao J.-S."/>
            <person name="Richardson P."/>
        </authorList>
    </citation>
    <scope>NUCLEOTIDE SEQUENCE [LARGE SCALE GENOMIC DNA]</scope>
    <source>
        <strain>HAW-EB4</strain>
    </source>
</reference>
<protein>
    <recommendedName>
        <fullName evidence="1">S-adenosylmethionine synthase</fullName>
        <shortName evidence="1">AdoMet synthase</shortName>
        <ecNumber evidence="1">2.5.1.6</ecNumber>
    </recommendedName>
    <alternativeName>
        <fullName evidence="1">MAT</fullName>
    </alternativeName>
    <alternativeName>
        <fullName evidence="1">Methionine adenosyltransferase</fullName>
    </alternativeName>
</protein>
<sequence>MAKHLFTSESVSEGHPDKIADQISDAVLDAILEQDPKARVACETYVKTGMVMVGGEVTTSAWVDIEEITRKTVRDIGYTHSDMGFDADSCAILNVIGKQSPDINQGVDRADPKEQGAGDQGLMFGYANNETDSLMPAPITYSHMLVKRQSEVRKDKTLPWLRPDAKSQVTFAYNPDGSIAGIDAVVLSTQHCDSVSQSDLIEGVMETIIKPVLPAKWLSKDTKYFINPTGRFVIGGPVGDCGLTGRKIIVDTYGGMARHGGGAFSGKDPSKVDRSAAYAARYVAKNIVAAGLADRCEIQVSYAIGVAEPTSISIETFGTAKVGEELLIDLVRRHFDLRPYGLTEMLNLARPIYQATAAYGHFGREEFPWEATDKVEVLRADAGI</sequence>
<evidence type="ECO:0000255" key="1">
    <source>
        <dbReference type="HAMAP-Rule" id="MF_00086"/>
    </source>
</evidence>
<organism>
    <name type="scientific">Shewanella halifaxensis (strain HAW-EB4)</name>
    <dbReference type="NCBI Taxonomy" id="458817"/>
    <lineage>
        <taxon>Bacteria</taxon>
        <taxon>Pseudomonadati</taxon>
        <taxon>Pseudomonadota</taxon>
        <taxon>Gammaproteobacteria</taxon>
        <taxon>Alteromonadales</taxon>
        <taxon>Shewanellaceae</taxon>
        <taxon>Shewanella</taxon>
    </lineage>
</organism>
<dbReference type="EC" id="2.5.1.6" evidence="1"/>
<dbReference type="EMBL" id="CP000931">
    <property type="protein sequence ID" value="ABZ75418.1"/>
    <property type="molecule type" value="Genomic_DNA"/>
</dbReference>
<dbReference type="RefSeq" id="WP_012275970.1">
    <property type="nucleotide sequence ID" value="NC_010334.1"/>
</dbReference>
<dbReference type="SMR" id="B0TUB8"/>
<dbReference type="STRING" id="458817.Shal_0843"/>
<dbReference type="KEGG" id="shl:Shal_0843"/>
<dbReference type="eggNOG" id="COG0192">
    <property type="taxonomic scope" value="Bacteria"/>
</dbReference>
<dbReference type="HOGENOM" id="CLU_041802_1_1_6"/>
<dbReference type="OrthoDB" id="9801686at2"/>
<dbReference type="UniPathway" id="UPA00315">
    <property type="reaction ID" value="UER00080"/>
</dbReference>
<dbReference type="Proteomes" id="UP000001317">
    <property type="component" value="Chromosome"/>
</dbReference>
<dbReference type="GO" id="GO:0005737">
    <property type="term" value="C:cytoplasm"/>
    <property type="evidence" value="ECO:0007669"/>
    <property type="project" value="UniProtKB-SubCell"/>
</dbReference>
<dbReference type="GO" id="GO:0005524">
    <property type="term" value="F:ATP binding"/>
    <property type="evidence" value="ECO:0007669"/>
    <property type="project" value="UniProtKB-UniRule"/>
</dbReference>
<dbReference type="GO" id="GO:0000287">
    <property type="term" value="F:magnesium ion binding"/>
    <property type="evidence" value="ECO:0007669"/>
    <property type="project" value="UniProtKB-UniRule"/>
</dbReference>
<dbReference type="GO" id="GO:0004478">
    <property type="term" value="F:methionine adenosyltransferase activity"/>
    <property type="evidence" value="ECO:0007669"/>
    <property type="project" value="UniProtKB-UniRule"/>
</dbReference>
<dbReference type="GO" id="GO:0006730">
    <property type="term" value="P:one-carbon metabolic process"/>
    <property type="evidence" value="ECO:0007669"/>
    <property type="project" value="UniProtKB-KW"/>
</dbReference>
<dbReference type="GO" id="GO:0006556">
    <property type="term" value="P:S-adenosylmethionine biosynthetic process"/>
    <property type="evidence" value="ECO:0007669"/>
    <property type="project" value="UniProtKB-UniRule"/>
</dbReference>
<dbReference type="CDD" id="cd18079">
    <property type="entry name" value="S-AdoMet_synt"/>
    <property type="match status" value="1"/>
</dbReference>
<dbReference type="FunFam" id="3.30.300.10:FF:000001">
    <property type="entry name" value="S-adenosylmethionine synthase"/>
    <property type="match status" value="1"/>
</dbReference>
<dbReference type="FunFam" id="3.30.300.10:FF:000003">
    <property type="entry name" value="S-adenosylmethionine synthase"/>
    <property type="match status" value="1"/>
</dbReference>
<dbReference type="FunFam" id="3.30.300.10:FF:000004">
    <property type="entry name" value="S-adenosylmethionine synthase"/>
    <property type="match status" value="1"/>
</dbReference>
<dbReference type="Gene3D" id="3.30.300.10">
    <property type="match status" value="3"/>
</dbReference>
<dbReference type="HAMAP" id="MF_00086">
    <property type="entry name" value="S_AdoMet_synth1"/>
    <property type="match status" value="1"/>
</dbReference>
<dbReference type="InterPro" id="IPR022631">
    <property type="entry name" value="ADOMET_SYNTHASE_CS"/>
</dbReference>
<dbReference type="InterPro" id="IPR022630">
    <property type="entry name" value="S-AdoMet_synt_C"/>
</dbReference>
<dbReference type="InterPro" id="IPR022629">
    <property type="entry name" value="S-AdoMet_synt_central"/>
</dbReference>
<dbReference type="InterPro" id="IPR022628">
    <property type="entry name" value="S-AdoMet_synt_N"/>
</dbReference>
<dbReference type="InterPro" id="IPR002133">
    <property type="entry name" value="S-AdoMet_synthetase"/>
</dbReference>
<dbReference type="InterPro" id="IPR022636">
    <property type="entry name" value="S-AdoMet_synthetase_sfam"/>
</dbReference>
<dbReference type="NCBIfam" id="TIGR01034">
    <property type="entry name" value="metK"/>
    <property type="match status" value="1"/>
</dbReference>
<dbReference type="PANTHER" id="PTHR11964">
    <property type="entry name" value="S-ADENOSYLMETHIONINE SYNTHETASE"/>
    <property type="match status" value="1"/>
</dbReference>
<dbReference type="Pfam" id="PF02773">
    <property type="entry name" value="S-AdoMet_synt_C"/>
    <property type="match status" value="1"/>
</dbReference>
<dbReference type="Pfam" id="PF02772">
    <property type="entry name" value="S-AdoMet_synt_M"/>
    <property type="match status" value="1"/>
</dbReference>
<dbReference type="Pfam" id="PF00438">
    <property type="entry name" value="S-AdoMet_synt_N"/>
    <property type="match status" value="1"/>
</dbReference>
<dbReference type="PIRSF" id="PIRSF000497">
    <property type="entry name" value="MAT"/>
    <property type="match status" value="1"/>
</dbReference>
<dbReference type="SUPFAM" id="SSF55973">
    <property type="entry name" value="S-adenosylmethionine synthetase"/>
    <property type="match status" value="3"/>
</dbReference>
<dbReference type="PROSITE" id="PS00376">
    <property type="entry name" value="ADOMET_SYNTHASE_1"/>
    <property type="match status" value="1"/>
</dbReference>
<dbReference type="PROSITE" id="PS00377">
    <property type="entry name" value="ADOMET_SYNTHASE_2"/>
    <property type="match status" value="1"/>
</dbReference>
<accession>B0TUB8</accession>
<comment type="function">
    <text evidence="1">Catalyzes the formation of S-adenosylmethionine (AdoMet) from methionine and ATP. The overall synthetic reaction is composed of two sequential steps, AdoMet formation and the subsequent tripolyphosphate hydrolysis which occurs prior to release of AdoMet from the enzyme.</text>
</comment>
<comment type="catalytic activity">
    <reaction evidence="1">
        <text>L-methionine + ATP + H2O = S-adenosyl-L-methionine + phosphate + diphosphate</text>
        <dbReference type="Rhea" id="RHEA:21080"/>
        <dbReference type="ChEBI" id="CHEBI:15377"/>
        <dbReference type="ChEBI" id="CHEBI:30616"/>
        <dbReference type="ChEBI" id="CHEBI:33019"/>
        <dbReference type="ChEBI" id="CHEBI:43474"/>
        <dbReference type="ChEBI" id="CHEBI:57844"/>
        <dbReference type="ChEBI" id="CHEBI:59789"/>
        <dbReference type="EC" id="2.5.1.6"/>
    </reaction>
</comment>
<comment type="cofactor">
    <cofactor evidence="1">
        <name>Mg(2+)</name>
        <dbReference type="ChEBI" id="CHEBI:18420"/>
    </cofactor>
    <text evidence="1">Binds 2 divalent ions per subunit.</text>
</comment>
<comment type="cofactor">
    <cofactor evidence="1">
        <name>K(+)</name>
        <dbReference type="ChEBI" id="CHEBI:29103"/>
    </cofactor>
    <text evidence="1">Binds 1 potassium ion per subunit.</text>
</comment>
<comment type="pathway">
    <text evidence="1">Amino-acid biosynthesis; S-adenosyl-L-methionine biosynthesis; S-adenosyl-L-methionine from L-methionine: step 1/1.</text>
</comment>
<comment type="subunit">
    <text evidence="1">Homotetramer; dimer of dimers.</text>
</comment>
<comment type="subcellular location">
    <subcellularLocation>
        <location evidence="1">Cytoplasm</location>
    </subcellularLocation>
</comment>
<comment type="similarity">
    <text evidence="1">Belongs to the AdoMet synthase family.</text>
</comment>
<proteinExistence type="inferred from homology"/>
<feature type="chain" id="PRO_1000075393" description="S-adenosylmethionine synthase">
    <location>
        <begin position="1"/>
        <end position="384"/>
    </location>
</feature>
<feature type="region of interest" description="Flexible loop" evidence="1">
    <location>
        <begin position="99"/>
        <end position="109"/>
    </location>
</feature>
<feature type="binding site" description="in other chain" evidence="1">
    <location>
        <position position="15"/>
    </location>
    <ligand>
        <name>ATP</name>
        <dbReference type="ChEBI" id="CHEBI:30616"/>
        <note>ligand shared between two neighboring subunits</note>
    </ligand>
</feature>
<feature type="binding site" evidence="1">
    <location>
        <position position="17"/>
    </location>
    <ligand>
        <name>Mg(2+)</name>
        <dbReference type="ChEBI" id="CHEBI:18420"/>
    </ligand>
</feature>
<feature type="binding site" evidence="1">
    <location>
        <position position="43"/>
    </location>
    <ligand>
        <name>K(+)</name>
        <dbReference type="ChEBI" id="CHEBI:29103"/>
    </ligand>
</feature>
<feature type="binding site" description="in other chain" evidence="1">
    <location>
        <position position="56"/>
    </location>
    <ligand>
        <name>L-methionine</name>
        <dbReference type="ChEBI" id="CHEBI:57844"/>
        <note>ligand shared between two neighboring subunits</note>
    </ligand>
</feature>
<feature type="binding site" description="in other chain" evidence="1">
    <location>
        <position position="99"/>
    </location>
    <ligand>
        <name>L-methionine</name>
        <dbReference type="ChEBI" id="CHEBI:57844"/>
        <note>ligand shared between two neighboring subunits</note>
    </ligand>
</feature>
<feature type="binding site" description="in other chain" evidence="1">
    <location>
        <begin position="164"/>
        <end position="166"/>
    </location>
    <ligand>
        <name>ATP</name>
        <dbReference type="ChEBI" id="CHEBI:30616"/>
        <note>ligand shared between two neighboring subunits</note>
    </ligand>
</feature>
<feature type="binding site" description="in other chain" evidence="1">
    <location>
        <begin position="231"/>
        <end position="232"/>
    </location>
    <ligand>
        <name>ATP</name>
        <dbReference type="ChEBI" id="CHEBI:30616"/>
        <note>ligand shared between two neighboring subunits</note>
    </ligand>
</feature>
<feature type="binding site" evidence="1">
    <location>
        <position position="240"/>
    </location>
    <ligand>
        <name>ATP</name>
        <dbReference type="ChEBI" id="CHEBI:30616"/>
        <note>ligand shared between two neighboring subunits</note>
    </ligand>
</feature>
<feature type="binding site" evidence="1">
    <location>
        <position position="240"/>
    </location>
    <ligand>
        <name>L-methionine</name>
        <dbReference type="ChEBI" id="CHEBI:57844"/>
        <note>ligand shared between two neighboring subunits</note>
    </ligand>
</feature>
<feature type="binding site" description="in other chain" evidence="1">
    <location>
        <begin position="246"/>
        <end position="247"/>
    </location>
    <ligand>
        <name>ATP</name>
        <dbReference type="ChEBI" id="CHEBI:30616"/>
        <note>ligand shared between two neighboring subunits</note>
    </ligand>
</feature>
<feature type="binding site" evidence="1">
    <location>
        <position position="263"/>
    </location>
    <ligand>
        <name>ATP</name>
        <dbReference type="ChEBI" id="CHEBI:30616"/>
        <note>ligand shared between two neighboring subunits</note>
    </ligand>
</feature>
<feature type="binding site" evidence="1">
    <location>
        <position position="267"/>
    </location>
    <ligand>
        <name>ATP</name>
        <dbReference type="ChEBI" id="CHEBI:30616"/>
        <note>ligand shared between two neighboring subunits</note>
    </ligand>
</feature>
<feature type="binding site" description="in other chain" evidence="1">
    <location>
        <position position="271"/>
    </location>
    <ligand>
        <name>L-methionine</name>
        <dbReference type="ChEBI" id="CHEBI:57844"/>
        <note>ligand shared between two neighboring subunits</note>
    </ligand>
</feature>
<keyword id="KW-0067">ATP-binding</keyword>
<keyword id="KW-0963">Cytoplasm</keyword>
<keyword id="KW-0460">Magnesium</keyword>
<keyword id="KW-0479">Metal-binding</keyword>
<keyword id="KW-0547">Nucleotide-binding</keyword>
<keyword id="KW-0554">One-carbon metabolism</keyword>
<keyword id="KW-0630">Potassium</keyword>
<keyword id="KW-0808">Transferase</keyword>
<name>METK_SHEHH</name>
<gene>
    <name evidence="1" type="primary">metK</name>
    <name type="ordered locus">Shal_0843</name>
</gene>